<evidence type="ECO:0000255" key="1">
    <source>
        <dbReference type="HAMAP-Rule" id="MF_01334"/>
    </source>
</evidence>
<evidence type="ECO:0000305" key="2"/>
<keyword id="KW-0687">Ribonucleoprotein</keyword>
<keyword id="KW-0689">Ribosomal protein</keyword>
<keyword id="KW-0694">RNA-binding</keyword>
<keyword id="KW-0699">rRNA-binding</keyword>
<gene>
    <name evidence="1" type="primary">rplY</name>
    <name evidence="1" type="synonym">ctc</name>
    <name type="ordered locus">Bpet4001</name>
</gene>
<protein>
    <recommendedName>
        <fullName evidence="1">Large ribosomal subunit protein bL25</fullName>
    </recommendedName>
    <alternativeName>
        <fullName evidence="2">50S ribosomal protein L25</fullName>
    </alternativeName>
    <alternativeName>
        <fullName evidence="1">General stress protein CTC</fullName>
    </alternativeName>
</protein>
<feature type="chain" id="PRO_1000142492" description="Large ribosomal subunit protein bL25">
    <location>
        <begin position="1"/>
        <end position="207"/>
    </location>
</feature>
<accession>A9I6W5</accession>
<proteinExistence type="inferred from homology"/>
<comment type="function">
    <text evidence="1">This is one of the proteins that binds to the 5S RNA in the ribosome where it forms part of the central protuberance.</text>
</comment>
<comment type="subunit">
    <text evidence="1">Part of the 50S ribosomal subunit; part of the 5S rRNA/L5/L18/L25 subcomplex. Contacts the 5S rRNA. Binds to the 5S rRNA independently of L5 and L18.</text>
</comment>
<comment type="similarity">
    <text evidence="1">Belongs to the bacterial ribosomal protein bL25 family. CTC subfamily.</text>
</comment>
<sequence>MKFNATARSVQGSSASRRLRRAGRVPAIVYGGSAAPLNIELDHNEIYHALRKEEFHASILQMQLDGKEEAVLLRSVQWHAYKPQVLHVDFQRVDANQALHTKVPLHFINGENSPAVKLSSAIISHVVTELEITCLPAALPQYIEVDLGNLLGGGSVHLSDVKLPKGVTYVAHGSDANPVLASALVKGGGAAAADEGGDAAAAETPAA</sequence>
<organism>
    <name type="scientific">Bordetella petrii (strain ATCC BAA-461 / DSM 12804 / CCUG 43448)</name>
    <dbReference type="NCBI Taxonomy" id="340100"/>
    <lineage>
        <taxon>Bacteria</taxon>
        <taxon>Pseudomonadati</taxon>
        <taxon>Pseudomonadota</taxon>
        <taxon>Betaproteobacteria</taxon>
        <taxon>Burkholderiales</taxon>
        <taxon>Alcaligenaceae</taxon>
        <taxon>Bordetella</taxon>
    </lineage>
</organism>
<reference key="1">
    <citation type="journal article" date="2008" name="BMC Genomics">
        <title>The missing link: Bordetella petrii is endowed with both the metabolic versatility of environmental bacteria and virulence traits of pathogenic Bordetellae.</title>
        <authorList>
            <person name="Gross R."/>
            <person name="Guzman C.A."/>
            <person name="Sebaihia M."/>
            <person name="Martin dos Santos V.A.P."/>
            <person name="Pieper D.H."/>
            <person name="Koebnik R."/>
            <person name="Lechner M."/>
            <person name="Bartels D."/>
            <person name="Buhrmester J."/>
            <person name="Choudhuri J.V."/>
            <person name="Ebensen T."/>
            <person name="Gaigalat L."/>
            <person name="Herrmann S."/>
            <person name="Khachane A.N."/>
            <person name="Larisch C."/>
            <person name="Link S."/>
            <person name="Linke B."/>
            <person name="Meyer F."/>
            <person name="Mormann S."/>
            <person name="Nakunst D."/>
            <person name="Rueckert C."/>
            <person name="Schneiker-Bekel S."/>
            <person name="Schulze K."/>
            <person name="Voerholter F.-J."/>
            <person name="Yevsa T."/>
            <person name="Engle J.T."/>
            <person name="Goldman W.E."/>
            <person name="Puehler A."/>
            <person name="Goebel U.B."/>
            <person name="Goesmann A."/>
            <person name="Bloecker H."/>
            <person name="Kaiser O."/>
            <person name="Martinez-Arias R."/>
        </authorList>
    </citation>
    <scope>NUCLEOTIDE SEQUENCE [LARGE SCALE GENOMIC DNA]</scope>
    <source>
        <strain>ATCC BAA-461 / DSM 12804 / CCUG 43448</strain>
    </source>
</reference>
<dbReference type="EMBL" id="AM902716">
    <property type="protein sequence ID" value="CAP44349.1"/>
    <property type="molecule type" value="Genomic_DNA"/>
</dbReference>
<dbReference type="SMR" id="A9I6W5"/>
<dbReference type="STRING" id="94624.Bpet4001"/>
<dbReference type="KEGG" id="bpt:Bpet4001"/>
<dbReference type="eggNOG" id="COG1825">
    <property type="taxonomic scope" value="Bacteria"/>
</dbReference>
<dbReference type="Proteomes" id="UP000001225">
    <property type="component" value="Chromosome"/>
</dbReference>
<dbReference type="GO" id="GO:0022625">
    <property type="term" value="C:cytosolic large ribosomal subunit"/>
    <property type="evidence" value="ECO:0007669"/>
    <property type="project" value="TreeGrafter"/>
</dbReference>
<dbReference type="GO" id="GO:0008097">
    <property type="term" value="F:5S rRNA binding"/>
    <property type="evidence" value="ECO:0007669"/>
    <property type="project" value="InterPro"/>
</dbReference>
<dbReference type="GO" id="GO:0003735">
    <property type="term" value="F:structural constituent of ribosome"/>
    <property type="evidence" value="ECO:0007669"/>
    <property type="project" value="InterPro"/>
</dbReference>
<dbReference type="GO" id="GO:0006412">
    <property type="term" value="P:translation"/>
    <property type="evidence" value="ECO:0007669"/>
    <property type="project" value="UniProtKB-UniRule"/>
</dbReference>
<dbReference type="CDD" id="cd00495">
    <property type="entry name" value="Ribosomal_L25_TL5_CTC"/>
    <property type="match status" value="1"/>
</dbReference>
<dbReference type="FunFam" id="2.40.240.10:FF:000002">
    <property type="entry name" value="50S ribosomal protein L25"/>
    <property type="match status" value="1"/>
</dbReference>
<dbReference type="Gene3D" id="2.170.120.20">
    <property type="entry name" value="Ribosomal protein L25, beta domain"/>
    <property type="match status" value="1"/>
</dbReference>
<dbReference type="Gene3D" id="2.40.240.10">
    <property type="entry name" value="Ribosomal Protein L25, Chain P"/>
    <property type="match status" value="1"/>
</dbReference>
<dbReference type="HAMAP" id="MF_01336">
    <property type="entry name" value="Ribosomal_bL25"/>
    <property type="match status" value="1"/>
</dbReference>
<dbReference type="HAMAP" id="MF_01334">
    <property type="entry name" value="Ribosomal_bL25_CTC"/>
    <property type="match status" value="1"/>
</dbReference>
<dbReference type="InterPro" id="IPR020056">
    <property type="entry name" value="Rbsml_bL25/Gln-tRNA_synth_N"/>
</dbReference>
<dbReference type="InterPro" id="IPR011035">
    <property type="entry name" value="Ribosomal_bL25/Gln-tRNA_synth"/>
</dbReference>
<dbReference type="InterPro" id="IPR020057">
    <property type="entry name" value="Ribosomal_bL25_b-dom"/>
</dbReference>
<dbReference type="InterPro" id="IPR037121">
    <property type="entry name" value="Ribosomal_bL25_C"/>
</dbReference>
<dbReference type="InterPro" id="IPR001021">
    <property type="entry name" value="Ribosomal_bL25_long"/>
</dbReference>
<dbReference type="InterPro" id="IPR020055">
    <property type="entry name" value="Ribosomal_bL25_short"/>
</dbReference>
<dbReference type="InterPro" id="IPR029751">
    <property type="entry name" value="Ribosomal_L25_dom"/>
</dbReference>
<dbReference type="InterPro" id="IPR020930">
    <property type="entry name" value="Ribosomal_uL5_bac-type"/>
</dbReference>
<dbReference type="NCBIfam" id="TIGR00731">
    <property type="entry name" value="bL25_bact_ctc"/>
    <property type="match status" value="1"/>
</dbReference>
<dbReference type="NCBIfam" id="NF004128">
    <property type="entry name" value="PRK05618.1-2"/>
    <property type="match status" value="1"/>
</dbReference>
<dbReference type="NCBIfam" id="NF004130">
    <property type="entry name" value="PRK05618.1-5"/>
    <property type="match status" value="1"/>
</dbReference>
<dbReference type="NCBIfam" id="NF004612">
    <property type="entry name" value="PRK05943.1"/>
    <property type="match status" value="1"/>
</dbReference>
<dbReference type="PANTHER" id="PTHR33284">
    <property type="entry name" value="RIBOSOMAL PROTEIN L25/GLN-TRNA SYNTHETASE, ANTI-CODON-BINDING DOMAIN-CONTAINING PROTEIN"/>
    <property type="match status" value="1"/>
</dbReference>
<dbReference type="PANTHER" id="PTHR33284:SF1">
    <property type="entry name" value="RIBOSOMAL PROTEIN L25_GLN-TRNA SYNTHETASE, ANTI-CODON-BINDING DOMAIN-CONTAINING PROTEIN"/>
    <property type="match status" value="1"/>
</dbReference>
<dbReference type="Pfam" id="PF01386">
    <property type="entry name" value="Ribosomal_L25p"/>
    <property type="match status" value="1"/>
</dbReference>
<dbReference type="Pfam" id="PF14693">
    <property type="entry name" value="Ribosomal_TL5_C"/>
    <property type="match status" value="1"/>
</dbReference>
<dbReference type="SUPFAM" id="SSF50715">
    <property type="entry name" value="Ribosomal protein L25-like"/>
    <property type="match status" value="1"/>
</dbReference>
<name>RL25_BORPD</name>